<reference key="1">
    <citation type="journal article" date="1993" name="J. Biol. Chem.">
        <title>Molecular cloning of the rat adipocyte hormone-sensitive cyclic GMP-inhibited cyclic nucleotide phosphodiesterase.</title>
        <authorList>
            <person name="Taira M."/>
            <person name="Hockman S.C."/>
            <person name="Calvo J.C."/>
            <person name="Taira M."/>
            <person name="Belfrage P."/>
            <person name="Manganiello V.C."/>
        </authorList>
    </citation>
    <scope>NUCLEOTIDE SEQUENCE [MRNA]</scope>
    <scope>TISSUE SPECIFICITY</scope>
    <source>
        <strain>Sprague-Dawley</strain>
        <tissue>Adipose tissue</tissue>
    </source>
</reference>
<reference key="2">
    <citation type="journal article" date="1998" name="Cell Biochem. Biophys.">
        <title>Expression and characterization of deletion recombinants of two cGMP-inhibited cyclic nucleotide phosphodiesterases (PDE-3).</title>
        <authorList>
            <person name="He R."/>
            <person name="Komas N."/>
            <person name="Ekholm D."/>
            <person name="Murata T."/>
            <person name="Taira M."/>
            <person name="Hockman S.C."/>
            <person name="Degerman E."/>
            <person name="Manganiello V.C."/>
        </authorList>
    </citation>
    <scope>FUNCTION</scope>
    <scope>CATALYTIC ACTIVITY</scope>
    <scope>ACTIVITY REGULATION</scope>
    <source>
        <tissue>Adipose tissue</tissue>
    </source>
</reference>
<protein>
    <recommendedName>
        <fullName evidence="12">cGMP-inhibited 3',5'-cyclic phosphodiesterase 3B</fullName>
        <ecNumber evidence="9">3.1.4.17</ecNumber>
    </recommendedName>
    <alternativeName>
        <fullName>CGI PDE</fullName>
    </alternativeName>
    <alternativeName>
        <fullName>Cyclic GMP-inhibited phosphodiesterase B</fullName>
        <shortName>CGI-PDE B</shortName>
    </alternativeName>
    <alternativeName>
        <fullName evidence="10">RcGIPl</fullName>
    </alternativeName>
</protein>
<comment type="function">
    <text evidence="2 4 9">Cyclic nucleotide phosphodiesterase with a dual-specificity for the second messengers cAMP and cGMP, which are key regulators of many important physiological processes (PubMed:9631240). Regulates angiogenesis by inhibiting the cAMP-dependent guanine nucleotide exchange factor RAPGEF3 and downstream phosphatidylinositol 3-kinase gamma-mediated signaling (By similarity). Controls cardiac contractility by reducing cAMP concentration in cardiocytes (By similarity).</text>
</comment>
<comment type="catalytic activity">
    <reaction evidence="9">
        <text>a nucleoside 3',5'-cyclic phosphate + H2O = a nucleoside 5'-phosphate + H(+)</text>
        <dbReference type="Rhea" id="RHEA:14653"/>
        <dbReference type="ChEBI" id="CHEBI:15377"/>
        <dbReference type="ChEBI" id="CHEBI:15378"/>
        <dbReference type="ChEBI" id="CHEBI:57867"/>
        <dbReference type="ChEBI" id="CHEBI:58464"/>
        <dbReference type="EC" id="3.1.4.17"/>
    </reaction>
    <physiologicalReaction direction="left-to-right" evidence="12">
        <dbReference type="Rhea" id="RHEA:14654"/>
    </physiologicalReaction>
</comment>
<comment type="catalytic activity">
    <reaction evidence="9">
        <text>3',5'-cyclic AMP + H2O = AMP + H(+)</text>
        <dbReference type="Rhea" id="RHEA:25277"/>
        <dbReference type="ChEBI" id="CHEBI:15377"/>
        <dbReference type="ChEBI" id="CHEBI:15378"/>
        <dbReference type="ChEBI" id="CHEBI:58165"/>
        <dbReference type="ChEBI" id="CHEBI:456215"/>
    </reaction>
    <physiologicalReaction direction="left-to-right" evidence="12">
        <dbReference type="Rhea" id="RHEA:25278"/>
    </physiologicalReaction>
</comment>
<comment type="catalytic activity">
    <reaction evidence="9">
        <text>3',5'-cyclic GMP + H2O = GMP + H(+)</text>
        <dbReference type="Rhea" id="RHEA:16957"/>
        <dbReference type="ChEBI" id="CHEBI:15377"/>
        <dbReference type="ChEBI" id="CHEBI:15378"/>
        <dbReference type="ChEBI" id="CHEBI:57746"/>
        <dbReference type="ChEBI" id="CHEBI:58115"/>
    </reaction>
    <physiologicalReaction direction="left-to-right" evidence="12">
        <dbReference type="Rhea" id="RHEA:16958"/>
    </physiologicalReaction>
</comment>
<comment type="cofactor">
    <cofactor evidence="2">
        <name>Mg(2+)</name>
        <dbReference type="ChEBI" id="CHEBI:18420"/>
    </cofactor>
    <text evidence="2">Binds 2 divalent metal cations per subunit.</text>
</comment>
<comment type="cofactor">
    <cofactor evidence="3">
        <name>Mn(2+)</name>
        <dbReference type="ChEBI" id="CHEBI:29035"/>
    </cofactor>
    <text evidence="3">Binds 2 divalent metal cations per subunit.</text>
</comment>
<comment type="activity regulation">
    <text evidence="9">Inhibited by cGMP.</text>
</comment>
<comment type="subunit">
    <text evidence="2 4">Homodimer (By similarity). Interacts with PIK3CG; regulates PDE3B activity and thereby cAMP levels in cells (By similarity). Interacts with RAPGEF3 and PIK3R6; form a signaling complex that regulates phosphatidylinositol 3-kinase gamma in angiogenesis (By similarity). Interacts with ABHD15; this interaction regulates PDE3B's stability and expression and, thereby, impacts the antilipolytic action of insulin (By similarity).</text>
</comment>
<comment type="subcellular location">
    <subcellularLocation>
        <location evidence="4">Membrane</location>
        <topology evidence="5">Multi-pass membrane protein</topology>
    </subcellularLocation>
</comment>
<comment type="tissue specificity">
    <text evidence="8">Abundant in adipose tissues.</text>
</comment>
<comment type="PTM">
    <text evidence="4">Phosphorylation at Ser-279 mediates insulin-induced activation of PDE3B.</text>
</comment>
<comment type="similarity">
    <text evidence="11">Belongs to the cyclic nucleotide phosphodiesterase family. PDE3 subfamily.</text>
</comment>
<sequence length="1108" mass="123107">MRKDERERDTPAMRSPPPPPPPATATAASPPESLRNGYVKSCVSPLRQDPPRSFFFHLCRFCNVEPPAASLRAGARLSLAALAAFVLAALLGAGPERWAAAATGLRTLLSACSLSLSPLFSIACAFFFLTCFLTRAQRGPDRGAGSWWLLALPACCYLGDFAAWQWWSWLRGEPAAAAAGRLCLVLSCVGLLTLAPRVRLRHGVLVLLFAGLVWWVSFSGLGALPPALRPLLSCLVGGAGCLLALGLDHFFHVRGASPPPRSASTADEKVPVIRPRRRSSCVSLGESAAGYYGSGKMFRRPSLPCISREQMILWDWDLKQWCKPHYQNSGGGNGVDLSVLNEARNMVSDLLIDPSLPPQVISSLRSISSLMGAFSGSCRPKINSFTPFPGFYPCSEVEDPVEKGDRKLHKGLSSKPSFPTAQLRRSSGASGLLTSEHHSRWDRSGGKRPYQELSVSSHGCHLNGPFSSNLMTIPKQRSSSVSLTHHAGLRRAGALPSPSLLNSSSHVPVSAGCLTNRSPVGFLDTSDFLTKPSVTLHRSLGSVSSAADFHQYLRNSDSSLCSSCGHQILKYVSTCEPDGTDHHNEKSGEEDSTVFSKERLNIVETQEEETVKEDCRELFLEGDDHLMEEAQQPNIDQEVLLDPMLVEDYDSLIEKMSNWNFQIFELVEKMGEKSGRILSQVMYTLFQDTGLLETFKIPTQEFMNYFRALENGYRDIPYHNRVHATDVLHAVWYLTTRPIPGLQQLHNNHETETKADSDARLSSGQIAYLSSKSCCIPDKSYGCLSSNIPALELMALYVAAAMHDYDHPGRTNAFLVATNAPQAVLYNDRSVLENHHAASAWNLYLSRPEYNFLLNLDHMEFKRFRFLVIEAILATDLKKHFDFLAEFNAKANDVNSNGIEWSSENDRLLVCQVCIKLADINGPAKDRDLHLRWTEGIVNEFYEQGDEEATLGLPISPFMDRSSPQLAKLQESFITHIVGPLCNSYDAAGLLPGQWIEAEEGDDTESDDDDDDDDDDDDDDDEELDSDDEETEDNLNPKPQRRKGRRRIFCQLMHHLTENHKIWKEIIEEEEKCKAEGNKLQVDNASLPQADEIQVIEEADEEEEQMFE</sequence>
<accession>Q63085</accession>
<proteinExistence type="evidence at protein level"/>
<gene>
    <name evidence="13" type="primary">Pde3b</name>
</gene>
<feature type="chain" id="PRO_0000198804" description="cGMP-inhibited 3',5'-cyclic phosphodiesterase 3B">
    <location>
        <begin position="1"/>
        <end position="1108"/>
    </location>
</feature>
<feature type="transmembrane region" description="Helical" evidence="5">
    <location>
        <begin position="73"/>
        <end position="93"/>
    </location>
</feature>
<feature type="transmembrane region" description="Helical" evidence="5">
    <location>
        <begin position="114"/>
        <end position="134"/>
    </location>
</feature>
<feature type="transmembrane region" description="Helical" evidence="5">
    <location>
        <begin position="144"/>
        <end position="164"/>
    </location>
</feature>
<feature type="transmembrane region" description="Helical" evidence="5">
    <location>
        <begin position="175"/>
        <end position="195"/>
    </location>
</feature>
<feature type="transmembrane region" description="Helical" evidence="5">
    <location>
        <begin position="204"/>
        <end position="224"/>
    </location>
</feature>
<feature type="transmembrane region" description="Helical" evidence="5">
    <location>
        <begin position="231"/>
        <end position="251"/>
    </location>
</feature>
<feature type="domain" description="PDEase" evidence="6">
    <location>
        <begin position="633"/>
        <end position="1070"/>
    </location>
</feature>
<feature type="region of interest" description="Disordered" evidence="7">
    <location>
        <begin position="1"/>
        <end position="32"/>
    </location>
</feature>
<feature type="region of interest" description="Interaction with RAPGEF3" evidence="2">
    <location>
        <begin position="1"/>
        <end position="32"/>
    </location>
</feature>
<feature type="region of interest" description="Disordered" evidence="7">
    <location>
        <begin position="405"/>
        <end position="448"/>
    </location>
</feature>
<feature type="region of interest" description="Interaction with PIK3R6" evidence="2">
    <location>
        <begin position="421"/>
        <end position="445"/>
    </location>
</feature>
<feature type="region of interest" description="Disordered" evidence="7">
    <location>
        <begin position="999"/>
        <end position="1042"/>
    </location>
</feature>
<feature type="compositionally biased region" description="Basic and acidic residues" evidence="7">
    <location>
        <begin position="1"/>
        <end position="11"/>
    </location>
</feature>
<feature type="compositionally biased region" description="Pro residues" evidence="7">
    <location>
        <begin position="14"/>
        <end position="23"/>
    </location>
</feature>
<feature type="compositionally biased region" description="Polar residues" evidence="7">
    <location>
        <begin position="414"/>
        <end position="433"/>
    </location>
</feature>
<feature type="compositionally biased region" description="Basic and acidic residues" evidence="7">
    <location>
        <begin position="435"/>
        <end position="445"/>
    </location>
</feature>
<feature type="compositionally biased region" description="Acidic residues" evidence="7">
    <location>
        <begin position="999"/>
        <end position="1033"/>
    </location>
</feature>
<feature type="active site" description="Proton donor" evidence="1">
    <location>
        <position position="719"/>
    </location>
</feature>
<feature type="binding site" evidence="3">
    <location>
        <position position="719"/>
    </location>
    <ligand>
        <name>AMP</name>
        <dbReference type="ChEBI" id="CHEBI:456215"/>
    </ligand>
</feature>
<feature type="binding site" evidence="2">
    <location>
        <position position="723"/>
    </location>
    <ligand>
        <name>Mg(2+)</name>
        <dbReference type="ChEBI" id="CHEBI:18420"/>
        <label>1</label>
    </ligand>
</feature>
<feature type="binding site" evidence="2">
    <location>
        <position position="803"/>
    </location>
    <ligand>
        <name>Mg(2+)</name>
        <dbReference type="ChEBI" id="CHEBI:18420"/>
        <label>1</label>
    </ligand>
</feature>
<feature type="binding site" evidence="3">
    <location>
        <position position="804"/>
    </location>
    <ligand>
        <name>AMP</name>
        <dbReference type="ChEBI" id="CHEBI:456215"/>
    </ligand>
</feature>
<feature type="binding site" evidence="2">
    <location>
        <position position="804"/>
    </location>
    <ligand>
        <name>Mg(2+)</name>
        <dbReference type="ChEBI" id="CHEBI:18420"/>
        <label>1</label>
    </ligand>
</feature>
<feature type="binding site" evidence="2">
    <location>
        <position position="804"/>
    </location>
    <ligand>
        <name>Mg(2+)</name>
        <dbReference type="ChEBI" id="CHEBI:18420"/>
        <label>2</label>
    </ligand>
</feature>
<feature type="binding site" evidence="3">
    <location>
        <position position="919"/>
    </location>
    <ligand>
        <name>AMP</name>
        <dbReference type="ChEBI" id="CHEBI:456215"/>
    </ligand>
</feature>
<feature type="binding site" evidence="2">
    <location>
        <position position="919"/>
    </location>
    <ligand>
        <name>Mg(2+)</name>
        <dbReference type="ChEBI" id="CHEBI:18420"/>
        <label>1</label>
    </ligand>
</feature>
<feature type="binding site" evidence="3">
    <location>
        <position position="970"/>
    </location>
    <ligand>
        <name>AMP</name>
        <dbReference type="ChEBI" id="CHEBI:456215"/>
    </ligand>
</feature>
<feature type="modified residue" description="Phosphoserine" evidence="4">
    <location>
        <position position="15"/>
    </location>
</feature>
<feature type="modified residue" description="Phosphoserine; by PKB/AKT1 or PKB/AKT2" evidence="4">
    <location>
        <position position="279"/>
    </location>
</feature>
<feature type="modified residue" description="Phosphoserine" evidence="4">
    <location>
        <position position="280"/>
    </location>
</feature>
<feature type="modified residue" description="Phosphoserine" evidence="2">
    <location>
        <position position="427"/>
    </location>
</feature>
<name>PDE3B_RAT</name>
<evidence type="ECO:0000250" key="1">
    <source>
        <dbReference type="UniProtKB" id="O76083"/>
    </source>
</evidence>
<evidence type="ECO:0000250" key="2">
    <source>
        <dbReference type="UniProtKB" id="Q13370"/>
    </source>
</evidence>
<evidence type="ECO:0000250" key="3">
    <source>
        <dbReference type="UniProtKB" id="Q14432"/>
    </source>
</evidence>
<evidence type="ECO:0000250" key="4">
    <source>
        <dbReference type="UniProtKB" id="Q61409"/>
    </source>
</evidence>
<evidence type="ECO:0000255" key="5"/>
<evidence type="ECO:0000255" key="6">
    <source>
        <dbReference type="PROSITE-ProRule" id="PRU01192"/>
    </source>
</evidence>
<evidence type="ECO:0000256" key="7">
    <source>
        <dbReference type="SAM" id="MobiDB-lite"/>
    </source>
</evidence>
<evidence type="ECO:0000269" key="8">
    <source>
    </source>
</evidence>
<evidence type="ECO:0000269" key="9">
    <source>
    </source>
</evidence>
<evidence type="ECO:0000303" key="10">
    <source>
    </source>
</evidence>
<evidence type="ECO:0000305" key="11"/>
<evidence type="ECO:0000305" key="12">
    <source>
    </source>
</evidence>
<evidence type="ECO:0000312" key="13">
    <source>
        <dbReference type="RGD" id="61943"/>
    </source>
</evidence>
<keyword id="KW-0037">Angiogenesis</keyword>
<keyword id="KW-0114">cAMP</keyword>
<keyword id="KW-0140">cGMP</keyword>
<keyword id="KW-0378">Hydrolase</keyword>
<keyword id="KW-0460">Magnesium</keyword>
<keyword id="KW-0472">Membrane</keyword>
<keyword id="KW-0479">Metal-binding</keyword>
<keyword id="KW-0597">Phosphoprotein</keyword>
<keyword id="KW-1185">Reference proteome</keyword>
<keyword id="KW-0812">Transmembrane</keyword>
<keyword id="KW-1133">Transmembrane helix</keyword>
<organism>
    <name type="scientific">Rattus norvegicus</name>
    <name type="common">Rat</name>
    <dbReference type="NCBI Taxonomy" id="10116"/>
    <lineage>
        <taxon>Eukaryota</taxon>
        <taxon>Metazoa</taxon>
        <taxon>Chordata</taxon>
        <taxon>Craniata</taxon>
        <taxon>Vertebrata</taxon>
        <taxon>Euteleostomi</taxon>
        <taxon>Mammalia</taxon>
        <taxon>Eutheria</taxon>
        <taxon>Euarchontoglires</taxon>
        <taxon>Glires</taxon>
        <taxon>Rodentia</taxon>
        <taxon>Myomorpha</taxon>
        <taxon>Muroidea</taxon>
        <taxon>Muridae</taxon>
        <taxon>Murinae</taxon>
        <taxon>Rattus</taxon>
    </lineage>
</organism>
<dbReference type="EC" id="3.1.4.17" evidence="9"/>
<dbReference type="EMBL" id="Z22867">
    <property type="protein sequence ID" value="CAA80489.1"/>
    <property type="molecule type" value="mRNA"/>
</dbReference>
<dbReference type="PIR" id="A48508">
    <property type="entry name" value="A48508"/>
</dbReference>
<dbReference type="RefSeq" id="NP_058925.1">
    <property type="nucleotide sequence ID" value="NM_017229.1"/>
</dbReference>
<dbReference type="SMR" id="Q63085"/>
<dbReference type="CORUM" id="Q63085"/>
<dbReference type="FunCoup" id="Q63085">
    <property type="interactions" value="179"/>
</dbReference>
<dbReference type="STRING" id="10116.ENSRNOP00000015498"/>
<dbReference type="iPTMnet" id="Q63085"/>
<dbReference type="PhosphoSitePlus" id="Q63085"/>
<dbReference type="PaxDb" id="10116-ENSRNOP00000015498"/>
<dbReference type="DNASU" id="29516"/>
<dbReference type="GeneID" id="29516"/>
<dbReference type="KEGG" id="rno:29516"/>
<dbReference type="UCSC" id="RGD:61943">
    <property type="organism name" value="rat"/>
</dbReference>
<dbReference type="AGR" id="RGD:61943"/>
<dbReference type="CTD" id="5140"/>
<dbReference type="RGD" id="61943">
    <property type="gene designation" value="Pde3b"/>
</dbReference>
<dbReference type="eggNOG" id="ENOG502QSV8">
    <property type="taxonomic scope" value="Eukaryota"/>
</dbReference>
<dbReference type="InParanoid" id="Q63085"/>
<dbReference type="PhylomeDB" id="Q63085"/>
<dbReference type="Reactome" id="R-RNO-165160">
    <property type="pathway name" value="PDE3B signalling"/>
</dbReference>
<dbReference type="Reactome" id="R-RNO-418555">
    <property type="pathway name" value="G alpha (s) signalling events"/>
</dbReference>
<dbReference type="SABIO-RK" id="Q63085"/>
<dbReference type="PRO" id="PR:Q63085"/>
<dbReference type="Proteomes" id="UP000002494">
    <property type="component" value="Unplaced"/>
</dbReference>
<dbReference type="GO" id="GO:0005783">
    <property type="term" value="C:endoplasmic reticulum"/>
    <property type="evidence" value="ECO:0000266"/>
    <property type="project" value="RGD"/>
</dbReference>
<dbReference type="GO" id="GO:0005794">
    <property type="term" value="C:Golgi apparatus"/>
    <property type="evidence" value="ECO:0000266"/>
    <property type="project" value="RGD"/>
</dbReference>
<dbReference type="GO" id="GO:0032045">
    <property type="term" value="C:guanyl-nucleotide exchange factor complex"/>
    <property type="evidence" value="ECO:0000266"/>
    <property type="project" value="RGD"/>
</dbReference>
<dbReference type="GO" id="GO:0016020">
    <property type="term" value="C:membrane"/>
    <property type="evidence" value="ECO:0000266"/>
    <property type="project" value="RGD"/>
</dbReference>
<dbReference type="GO" id="GO:0004115">
    <property type="term" value="F:3',5'-cyclic-AMP phosphodiesterase activity"/>
    <property type="evidence" value="ECO:0000314"/>
    <property type="project" value="UniProtKB"/>
</dbReference>
<dbReference type="GO" id="GO:0047555">
    <property type="term" value="F:3',5'-cyclic-GMP phosphodiesterase activity"/>
    <property type="evidence" value="ECO:0000314"/>
    <property type="project" value="UniProtKB"/>
</dbReference>
<dbReference type="GO" id="GO:0004114">
    <property type="term" value="F:3',5'-cyclic-nucleotide phosphodiesterase activity"/>
    <property type="evidence" value="ECO:0000266"/>
    <property type="project" value="RGD"/>
</dbReference>
<dbReference type="GO" id="GO:0046872">
    <property type="term" value="F:metal ion binding"/>
    <property type="evidence" value="ECO:0007669"/>
    <property type="project" value="UniProtKB-KW"/>
</dbReference>
<dbReference type="GO" id="GO:0051219">
    <property type="term" value="F:phosphoprotein binding"/>
    <property type="evidence" value="ECO:0000314"/>
    <property type="project" value="RGD"/>
</dbReference>
<dbReference type="GO" id="GO:0043422">
    <property type="term" value="F:protein kinase B binding"/>
    <property type="evidence" value="ECO:0000250"/>
    <property type="project" value="BHF-UCL"/>
</dbReference>
<dbReference type="GO" id="GO:0001525">
    <property type="term" value="P:angiogenesis"/>
    <property type="evidence" value="ECO:0007669"/>
    <property type="project" value="UniProtKB-KW"/>
</dbReference>
<dbReference type="GO" id="GO:0019933">
    <property type="term" value="P:cAMP-mediated signaling"/>
    <property type="evidence" value="ECO:0000318"/>
    <property type="project" value="GO_Central"/>
</dbReference>
<dbReference type="GO" id="GO:0032869">
    <property type="term" value="P:cellular response to insulin stimulus"/>
    <property type="evidence" value="ECO:0000250"/>
    <property type="project" value="BHF-UCL"/>
</dbReference>
<dbReference type="GO" id="GO:0031018">
    <property type="term" value="P:endocrine pancreas development"/>
    <property type="evidence" value="ECO:0000266"/>
    <property type="project" value="RGD"/>
</dbReference>
<dbReference type="GO" id="GO:0042593">
    <property type="term" value="P:glucose homeostasis"/>
    <property type="evidence" value="ECO:0000266"/>
    <property type="project" value="RGD"/>
</dbReference>
<dbReference type="GO" id="GO:0016525">
    <property type="term" value="P:negative regulation of angiogenesis"/>
    <property type="evidence" value="ECO:0000250"/>
    <property type="project" value="UniProtKB"/>
</dbReference>
<dbReference type="GO" id="GO:0141162">
    <property type="term" value="P:negative regulation of cAMP/PKA signal transduction"/>
    <property type="evidence" value="ECO:0000315"/>
    <property type="project" value="RGD"/>
</dbReference>
<dbReference type="GO" id="GO:0007162">
    <property type="term" value="P:negative regulation of cell adhesion"/>
    <property type="evidence" value="ECO:0000266"/>
    <property type="project" value="RGD"/>
</dbReference>
<dbReference type="GO" id="GO:0061179">
    <property type="term" value="P:negative regulation of insulin secretion involved in cellular response to glucose stimulus"/>
    <property type="evidence" value="ECO:0000315"/>
    <property type="project" value="RGD"/>
</dbReference>
<dbReference type="GO" id="GO:0050995">
    <property type="term" value="P:negative regulation of lipid catabolic process"/>
    <property type="evidence" value="ECO:0000266"/>
    <property type="project" value="RGD"/>
</dbReference>
<dbReference type="GO" id="GO:0050796">
    <property type="term" value="P:regulation of insulin secretion"/>
    <property type="evidence" value="ECO:0000266"/>
    <property type="project" value="RGD"/>
</dbReference>
<dbReference type="CDD" id="cd00077">
    <property type="entry name" value="HDc"/>
    <property type="match status" value="1"/>
</dbReference>
<dbReference type="FunFam" id="1.10.1300.10:FF:000008">
    <property type="entry name" value="Phosphodiesterase"/>
    <property type="match status" value="1"/>
</dbReference>
<dbReference type="Gene3D" id="1.10.1300.10">
    <property type="entry name" value="3'5'-cyclic nucleotide phosphodiesterase, catalytic domain"/>
    <property type="match status" value="1"/>
</dbReference>
<dbReference type="InterPro" id="IPR003607">
    <property type="entry name" value="HD/PDEase_dom"/>
</dbReference>
<dbReference type="InterPro" id="IPR002073">
    <property type="entry name" value="PDEase_catalytic_dom"/>
</dbReference>
<dbReference type="InterPro" id="IPR036971">
    <property type="entry name" value="PDEase_catalytic_dom_sf"/>
</dbReference>
<dbReference type="InterPro" id="IPR023174">
    <property type="entry name" value="PDEase_CS"/>
</dbReference>
<dbReference type="PANTHER" id="PTHR11347">
    <property type="entry name" value="CYCLIC NUCLEOTIDE PHOSPHODIESTERASE"/>
    <property type="match status" value="1"/>
</dbReference>
<dbReference type="Pfam" id="PF00233">
    <property type="entry name" value="PDEase_I"/>
    <property type="match status" value="1"/>
</dbReference>
<dbReference type="SMART" id="SM00471">
    <property type="entry name" value="HDc"/>
    <property type="match status" value="1"/>
</dbReference>
<dbReference type="SUPFAM" id="SSF109604">
    <property type="entry name" value="HD-domain/PDEase-like"/>
    <property type="match status" value="1"/>
</dbReference>
<dbReference type="PROSITE" id="PS00126">
    <property type="entry name" value="PDEASE_I_1"/>
    <property type="match status" value="1"/>
</dbReference>
<dbReference type="PROSITE" id="PS51845">
    <property type="entry name" value="PDEASE_I_2"/>
    <property type="match status" value="1"/>
</dbReference>